<organism>
    <name type="scientific">Aspergillus oryzae (strain ATCC 42149 / RIB 40)</name>
    <name type="common">Yellow koji mold</name>
    <dbReference type="NCBI Taxonomy" id="510516"/>
    <lineage>
        <taxon>Eukaryota</taxon>
        <taxon>Fungi</taxon>
        <taxon>Dikarya</taxon>
        <taxon>Ascomycota</taxon>
        <taxon>Pezizomycotina</taxon>
        <taxon>Eurotiomycetes</taxon>
        <taxon>Eurotiomycetidae</taxon>
        <taxon>Eurotiales</taxon>
        <taxon>Aspergillaceae</taxon>
        <taxon>Aspergillus</taxon>
        <taxon>Aspergillus subgen. Circumdati</taxon>
    </lineage>
</organism>
<proteinExistence type="inferred from homology"/>
<accession>Q2UPG7</accession>
<keyword id="KW-0539">Nucleus</keyword>
<keyword id="KW-1185">Reference proteome</keyword>
<dbReference type="EMBL" id="BA000049">
    <property type="protein sequence ID" value="BAE56548.1"/>
    <property type="molecule type" value="Genomic_DNA"/>
</dbReference>
<dbReference type="RefSeq" id="XP_001818550.1">
    <property type="nucleotide sequence ID" value="XM_001818498.2"/>
</dbReference>
<dbReference type="SMR" id="Q2UPG7"/>
<dbReference type="STRING" id="510516.Q2UPG7"/>
<dbReference type="EnsemblFungi" id="BAE56548">
    <property type="protein sequence ID" value="BAE56548"/>
    <property type="gene ID" value="AO090005001649"/>
</dbReference>
<dbReference type="GeneID" id="5990495"/>
<dbReference type="KEGG" id="aor:AO090005001649"/>
<dbReference type="VEuPathDB" id="FungiDB:AO090005001649"/>
<dbReference type="HOGENOM" id="CLU_098333_0_0_1"/>
<dbReference type="OMA" id="RRHIQWA"/>
<dbReference type="OrthoDB" id="124977at5052"/>
<dbReference type="Proteomes" id="UP000006564">
    <property type="component" value="Chromosome 1"/>
</dbReference>
<dbReference type="GO" id="GO:0005634">
    <property type="term" value="C:nucleus"/>
    <property type="evidence" value="ECO:0007669"/>
    <property type="project" value="UniProtKB-SubCell"/>
</dbReference>
<dbReference type="GO" id="GO:0008157">
    <property type="term" value="F:protein phosphatase 1 binding"/>
    <property type="evidence" value="ECO:0007669"/>
    <property type="project" value="TreeGrafter"/>
</dbReference>
<dbReference type="GO" id="GO:0004865">
    <property type="term" value="F:protein serine/threonine phosphatase inhibitor activity"/>
    <property type="evidence" value="ECO:0007669"/>
    <property type="project" value="InterPro"/>
</dbReference>
<dbReference type="InterPro" id="IPR011107">
    <property type="entry name" value="PPI_Ypi1"/>
</dbReference>
<dbReference type="PANTHER" id="PTHR20835:SF0">
    <property type="entry name" value="E3 UBIQUITIN-PROTEIN LIGASE PPP1R11"/>
    <property type="match status" value="1"/>
</dbReference>
<dbReference type="PANTHER" id="PTHR20835">
    <property type="entry name" value="E3 UBIQUITIN-PROTEIN LIGASE PPP1R11-RELATED"/>
    <property type="match status" value="1"/>
</dbReference>
<dbReference type="Pfam" id="PF07491">
    <property type="entry name" value="PPI_Ypi1"/>
    <property type="match status" value="1"/>
</dbReference>
<sequence>MSRSRQIAPSGTSQVESVPQQPNNTSTVRVPGTLRLRAENEPTVESNTEGRGLHRHIRWSEDVIDNEGMGKRSSKVCCIYHKARPVGESSSESESSDSESSDADSDNEIDNPRNTLGRSSVHHITDNHSHEQESEHDRERGRLTCCPNHGHRKLKRRRPSPNAYEKMPKTTKGR</sequence>
<name>YPI1_ASPOR</name>
<evidence type="ECO:0000250" key="1"/>
<evidence type="ECO:0000256" key="2">
    <source>
        <dbReference type="SAM" id="MobiDB-lite"/>
    </source>
</evidence>
<evidence type="ECO:0000305" key="3"/>
<comment type="function">
    <text evidence="1">Regulator of type 1 phosphatases which maintains protein phosphatase activity under strict control.</text>
</comment>
<comment type="subcellular location">
    <subcellularLocation>
        <location evidence="1">Nucleus</location>
    </subcellularLocation>
</comment>
<comment type="similarity">
    <text evidence="3">Belongs to the YPI1 family.</text>
</comment>
<gene>
    <name type="primary">ypi1</name>
    <name type="ORF">AO090005001649</name>
</gene>
<feature type="chain" id="PRO_0000333469" description="Type 1 phosphatases regulator ypi1">
    <location>
        <begin position="1"/>
        <end position="174"/>
    </location>
</feature>
<feature type="region of interest" description="Disordered" evidence="2">
    <location>
        <begin position="1"/>
        <end position="72"/>
    </location>
</feature>
<feature type="region of interest" description="Disordered" evidence="2">
    <location>
        <begin position="84"/>
        <end position="174"/>
    </location>
</feature>
<feature type="compositionally biased region" description="Polar residues" evidence="2">
    <location>
        <begin position="1"/>
        <end position="28"/>
    </location>
</feature>
<feature type="compositionally biased region" description="Acidic residues" evidence="2">
    <location>
        <begin position="94"/>
        <end position="109"/>
    </location>
</feature>
<feature type="compositionally biased region" description="Basic and acidic residues" evidence="2">
    <location>
        <begin position="123"/>
        <end position="142"/>
    </location>
</feature>
<feature type="compositionally biased region" description="Basic residues" evidence="2">
    <location>
        <begin position="149"/>
        <end position="159"/>
    </location>
</feature>
<protein>
    <recommendedName>
        <fullName>Type 1 phosphatases regulator ypi1</fullName>
    </recommendedName>
</protein>
<reference key="1">
    <citation type="journal article" date="2005" name="Nature">
        <title>Genome sequencing and analysis of Aspergillus oryzae.</title>
        <authorList>
            <person name="Machida M."/>
            <person name="Asai K."/>
            <person name="Sano M."/>
            <person name="Tanaka T."/>
            <person name="Kumagai T."/>
            <person name="Terai G."/>
            <person name="Kusumoto K."/>
            <person name="Arima T."/>
            <person name="Akita O."/>
            <person name="Kashiwagi Y."/>
            <person name="Abe K."/>
            <person name="Gomi K."/>
            <person name="Horiuchi H."/>
            <person name="Kitamoto K."/>
            <person name="Kobayashi T."/>
            <person name="Takeuchi M."/>
            <person name="Denning D.W."/>
            <person name="Galagan J.E."/>
            <person name="Nierman W.C."/>
            <person name="Yu J."/>
            <person name="Archer D.B."/>
            <person name="Bennett J.W."/>
            <person name="Bhatnagar D."/>
            <person name="Cleveland T.E."/>
            <person name="Fedorova N.D."/>
            <person name="Gotoh O."/>
            <person name="Horikawa H."/>
            <person name="Hosoyama A."/>
            <person name="Ichinomiya M."/>
            <person name="Igarashi R."/>
            <person name="Iwashita K."/>
            <person name="Juvvadi P.R."/>
            <person name="Kato M."/>
            <person name="Kato Y."/>
            <person name="Kin T."/>
            <person name="Kokubun A."/>
            <person name="Maeda H."/>
            <person name="Maeyama N."/>
            <person name="Maruyama J."/>
            <person name="Nagasaki H."/>
            <person name="Nakajima T."/>
            <person name="Oda K."/>
            <person name="Okada K."/>
            <person name="Paulsen I."/>
            <person name="Sakamoto K."/>
            <person name="Sawano T."/>
            <person name="Takahashi M."/>
            <person name="Takase K."/>
            <person name="Terabayashi Y."/>
            <person name="Wortman J.R."/>
            <person name="Yamada O."/>
            <person name="Yamagata Y."/>
            <person name="Anazawa H."/>
            <person name="Hata Y."/>
            <person name="Koide Y."/>
            <person name="Komori T."/>
            <person name="Koyama Y."/>
            <person name="Minetoki T."/>
            <person name="Suharnan S."/>
            <person name="Tanaka A."/>
            <person name="Isono K."/>
            <person name="Kuhara S."/>
            <person name="Ogasawara N."/>
            <person name="Kikuchi H."/>
        </authorList>
    </citation>
    <scope>NUCLEOTIDE SEQUENCE [LARGE SCALE GENOMIC DNA]</scope>
    <source>
        <strain>ATCC 42149 / RIB 40</strain>
    </source>
</reference>